<proteinExistence type="inferred from homology"/>
<protein>
    <recommendedName>
        <fullName evidence="1">Histidinol-phosphate aminotransferase</fullName>
        <ecNumber evidence="1">2.6.1.9</ecNumber>
    </recommendedName>
    <alternativeName>
        <fullName evidence="1">Imidazole acetol-phosphate transaminase</fullName>
    </alternativeName>
</protein>
<gene>
    <name evidence="1" type="primary">hisC</name>
    <name type="ordered locus">MLBr01258</name>
</gene>
<keyword id="KW-0028">Amino-acid biosynthesis</keyword>
<keyword id="KW-0032">Aminotransferase</keyword>
<keyword id="KW-0368">Histidine biosynthesis</keyword>
<keyword id="KW-0663">Pyridoxal phosphate</keyword>
<keyword id="KW-0808">Transferase</keyword>
<comment type="catalytic activity">
    <reaction evidence="1">
        <text>L-histidinol phosphate + 2-oxoglutarate = 3-(imidazol-4-yl)-2-oxopropyl phosphate + L-glutamate</text>
        <dbReference type="Rhea" id="RHEA:23744"/>
        <dbReference type="ChEBI" id="CHEBI:16810"/>
        <dbReference type="ChEBI" id="CHEBI:29985"/>
        <dbReference type="ChEBI" id="CHEBI:57766"/>
        <dbReference type="ChEBI" id="CHEBI:57980"/>
        <dbReference type="EC" id="2.6.1.9"/>
    </reaction>
</comment>
<comment type="cofactor">
    <cofactor evidence="1">
        <name>pyridoxal 5'-phosphate</name>
        <dbReference type="ChEBI" id="CHEBI:597326"/>
    </cofactor>
</comment>
<comment type="pathway">
    <text evidence="1">Amino-acid biosynthesis; L-histidine biosynthesis; L-histidine from 5-phospho-alpha-D-ribose 1-diphosphate: step 7/9.</text>
</comment>
<comment type="subunit">
    <text evidence="1">Homodimer.</text>
</comment>
<comment type="similarity">
    <text evidence="1">Belongs to the class-II pyridoxal-phosphate-dependent aminotransferase family. Histidinol-phosphate aminotransferase subfamily.</text>
</comment>
<reference key="1">
    <citation type="journal article" date="2009" name="Nat. Genet.">
        <title>Comparative genomic and phylogeographic analysis of Mycobacterium leprae.</title>
        <authorList>
            <person name="Monot M."/>
            <person name="Honore N."/>
            <person name="Garnier T."/>
            <person name="Zidane N."/>
            <person name="Sherafi D."/>
            <person name="Paniz-Mondolfi A."/>
            <person name="Matsuoka M."/>
            <person name="Taylor G.M."/>
            <person name="Donoghue H.D."/>
            <person name="Bouwman A."/>
            <person name="Mays S."/>
            <person name="Watson C."/>
            <person name="Lockwood D."/>
            <person name="Khamispour A."/>
            <person name="Dowlati Y."/>
            <person name="Jianping S."/>
            <person name="Rea T.H."/>
            <person name="Vera-Cabrera L."/>
            <person name="Stefani M.M."/>
            <person name="Banu S."/>
            <person name="Macdonald M."/>
            <person name="Sapkota B.R."/>
            <person name="Spencer J.S."/>
            <person name="Thomas J."/>
            <person name="Harshman K."/>
            <person name="Singh P."/>
            <person name="Busso P."/>
            <person name="Gattiker A."/>
            <person name="Rougemont J."/>
            <person name="Brennan P.J."/>
            <person name="Cole S.T."/>
        </authorList>
    </citation>
    <scope>NUCLEOTIDE SEQUENCE [LARGE SCALE GENOMIC DNA]</scope>
    <source>
        <strain>Br4923</strain>
    </source>
</reference>
<accession>B8ZRB0</accession>
<dbReference type="EC" id="2.6.1.9" evidence="1"/>
<dbReference type="EMBL" id="FM211192">
    <property type="protein sequence ID" value="CAR71353.1"/>
    <property type="molecule type" value="Genomic_DNA"/>
</dbReference>
<dbReference type="SMR" id="B8ZRB0"/>
<dbReference type="KEGG" id="mlb:MLBr01258"/>
<dbReference type="HOGENOM" id="CLU_017584_3_1_11"/>
<dbReference type="UniPathway" id="UPA00031">
    <property type="reaction ID" value="UER00012"/>
</dbReference>
<dbReference type="Proteomes" id="UP000006900">
    <property type="component" value="Chromosome"/>
</dbReference>
<dbReference type="GO" id="GO:0004400">
    <property type="term" value="F:histidinol-phosphate transaminase activity"/>
    <property type="evidence" value="ECO:0007669"/>
    <property type="project" value="UniProtKB-UniRule"/>
</dbReference>
<dbReference type="GO" id="GO:0030170">
    <property type="term" value="F:pyridoxal phosphate binding"/>
    <property type="evidence" value="ECO:0007669"/>
    <property type="project" value="InterPro"/>
</dbReference>
<dbReference type="GO" id="GO:0000105">
    <property type="term" value="P:L-histidine biosynthetic process"/>
    <property type="evidence" value="ECO:0007669"/>
    <property type="project" value="UniProtKB-UniRule"/>
</dbReference>
<dbReference type="CDD" id="cd00609">
    <property type="entry name" value="AAT_like"/>
    <property type="match status" value="1"/>
</dbReference>
<dbReference type="Gene3D" id="3.90.1150.10">
    <property type="entry name" value="Aspartate Aminotransferase, domain 1"/>
    <property type="match status" value="1"/>
</dbReference>
<dbReference type="Gene3D" id="3.40.640.10">
    <property type="entry name" value="Type I PLP-dependent aspartate aminotransferase-like (Major domain)"/>
    <property type="match status" value="1"/>
</dbReference>
<dbReference type="HAMAP" id="MF_01023">
    <property type="entry name" value="HisC_aminotrans_2"/>
    <property type="match status" value="1"/>
</dbReference>
<dbReference type="InterPro" id="IPR004839">
    <property type="entry name" value="Aminotransferase_I/II_large"/>
</dbReference>
<dbReference type="InterPro" id="IPR005861">
    <property type="entry name" value="HisP_aminotrans"/>
</dbReference>
<dbReference type="InterPro" id="IPR015424">
    <property type="entry name" value="PyrdxlP-dep_Trfase"/>
</dbReference>
<dbReference type="InterPro" id="IPR015421">
    <property type="entry name" value="PyrdxlP-dep_Trfase_major"/>
</dbReference>
<dbReference type="InterPro" id="IPR015422">
    <property type="entry name" value="PyrdxlP-dep_Trfase_small"/>
</dbReference>
<dbReference type="NCBIfam" id="TIGR01141">
    <property type="entry name" value="hisC"/>
    <property type="match status" value="1"/>
</dbReference>
<dbReference type="NCBIfam" id="NF002877">
    <property type="entry name" value="PRK03317.1"/>
    <property type="match status" value="1"/>
</dbReference>
<dbReference type="PANTHER" id="PTHR42885:SF2">
    <property type="entry name" value="HISTIDINOL-PHOSPHATE AMINOTRANSFERASE"/>
    <property type="match status" value="1"/>
</dbReference>
<dbReference type="PANTHER" id="PTHR42885">
    <property type="entry name" value="HISTIDINOL-PHOSPHATE AMINOTRANSFERASE-RELATED"/>
    <property type="match status" value="1"/>
</dbReference>
<dbReference type="Pfam" id="PF00155">
    <property type="entry name" value="Aminotran_1_2"/>
    <property type="match status" value="1"/>
</dbReference>
<dbReference type="SUPFAM" id="SSF53383">
    <property type="entry name" value="PLP-dependent transferases"/>
    <property type="match status" value="1"/>
</dbReference>
<evidence type="ECO:0000255" key="1">
    <source>
        <dbReference type="HAMAP-Rule" id="MF_01023"/>
    </source>
</evidence>
<organism>
    <name type="scientific">Mycobacterium leprae (strain Br4923)</name>
    <dbReference type="NCBI Taxonomy" id="561304"/>
    <lineage>
        <taxon>Bacteria</taxon>
        <taxon>Bacillati</taxon>
        <taxon>Actinomycetota</taxon>
        <taxon>Actinomycetes</taxon>
        <taxon>Mycobacteriales</taxon>
        <taxon>Mycobacteriaceae</taxon>
        <taxon>Mycobacterium</taxon>
    </lineage>
</organism>
<sequence>MNVPEPTLDDLPLRDNLRGKSPYGAMQLLVPVLLNTNENPHPPTKALVDDVVRSVQKVAVDLHRYPDRDAVALRQDLASYLTAQTGIRLGVENIWAANGSNEILQQLLQAFGGPGRSAIGFVPSYSMHPIIADGTHTEWLETVRADDFSLDVEAAVTAVADRKPDVVFIASPNNPSGQSISLADLRRLLDVVPGILIVDEAYGEFSSRPSAVALVGEYPTKIVVTRTTSKAFAFAGGRLGYLIATPALVEAMLLVRLPYHLSSVTQAAARAALRHADDTLGSVAALIAERERVTKSLVHMGFRVIPSDANFVLFGHFSDAAGAWQHYLDTGVLIRDVGIPGYLRATTGLAEENDAFLKASSEIAATELAPATTLGAS</sequence>
<name>HIS8_MYCLB</name>
<feature type="chain" id="PRO_1000149107" description="Histidinol-phosphate aminotransferase">
    <location>
        <begin position="1"/>
        <end position="377"/>
    </location>
</feature>
<feature type="modified residue" description="N6-(pyridoxal phosphate)lysine" evidence="1">
    <location>
        <position position="230"/>
    </location>
</feature>